<name>CH10_MYCUA</name>
<accession>A0PME8</accession>
<reference key="1">
    <citation type="journal article" date="2007" name="Genome Res.">
        <title>Reductive evolution and niche adaptation inferred from the genome of Mycobacterium ulcerans, the causative agent of Buruli ulcer.</title>
        <authorList>
            <person name="Stinear T.P."/>
            <person name="Seemann T."/>
            <person name="Pidot S."/>
            <person name="Frigui W."/>
            <person name="Reysset G."/>
            <person name="Garnier T."/>
            <person name="Meurice G."/>
            <person name="Simon D."/>
            <person name="Bouchier C."/>
            <person name="Ma L."/>
            <person name="Tichit M."/>
            <person name="Porter J.L."/>
            <person name="Ryan J."/>
            <person name="Johnson P.D.R."/>
            <person name="Davies J.K."/>
            <person name="Jenkin G.A."/>
            <person name="Small P.L.C."/>
            <person name="Jones L.M."/>
            <person name="Tekaia F."/>
            <person name="Laval F."/>
            <person name="Daffe M."/>
            <person name="Parkhill J."/>
            <person name="Cole S.T."/>
        </authorList>
    </citation>
    <scope>NUCLEOTIDE SEQUENCE [LARGE SCALE GENOMIC DNA]</scope>
    <source>
        <strain>Agy99</strain>
    </source>
</reference>
<keyword id="KW-0143">Chaperone</keyword>
<keyword id="KW-0963">Cytoplasm</keyword>
<dbReference type="EMBL" id="CP000325">
    <property type="protein sequence ID" value="ABL03517.1"/>
    <property type="molecule type" value="Genomic_DNA"/>
</dbReference>
<dbReference type="RefSeq" id="WP_011739140.1">
    <property type="nucleotide sequence ID" value="NC_008611.1"/>
</dbReference>
<dbReference type="SMR" id="A0PME8"/>
<dbReference type="GeneID" id="93438507"/>
<dbReference type="KEGG" id="mul:MUL_0885"/>
<dbReference type="eggNOG" id="COG0234">
    <property type="taxonomic scope" value="Bacteria"/>
</dbReference>
<dbReference type="HOGENOM" id="CLU_132825_2_0_11"/>
<dbReference type="Proteomes" id="UP000000765">
    <property type="component" value="Chromosome"/>
</dbReference>
<dbReference type="GO" id="GO:0005737">
    <property type="term" value="C:cytoplasm"/>
    <property type="evidence" value="ECO:0007669"/>
    <property type="project" value="UniProtKB-SubCell"/>
</dbReference>
<dbReference type="GO" id="GO:0005524">
    <property type="term" value="F:ATP binding"/>
    <property type="evidence" value="ECO:0007669"/>
    <property type="project" value="InterPro"/>
</dbReference>
<dbReference type="GO" id="GO:0046872">
    <property type="term" value="F:metal ion binding"/>
    <property type="evidence" value="ECO:0007669"/>
    <property type="project" value="TreeGrafter"/>
</dbReference>
<dbReference type="GO" id="GO:0044183">
    <property type="term" value="F:protein folding chaperone"/>
    <property type="evidence" value="ECO:0007669"/>
    <property type="project" value="InterPro"/>
</dbReference>
<dbReference type="GO" id="GO:0051087">
    <property type="term" value="F:protein-folding chaperone binding"/>
    <property type="evidence" value="ECO:0007669"/>
    <property type="project" value="TreeGrafter"/>
</dbReference>
<dbReference type="GO" id="GO:0051082">
    <property type="term" value="F:unfolded protein binding"/>
    <property type="evidence" value="ECO:0007669"/>
    <property type="project" value="TreeGrafter"/>
</dbReference>
<dbReference type="GO" id="GO:0051085">
    <property type="term" value="P:chaperone cofactor-dependent protein refolding"/>
    <property type="evidence" value="ECO:0007669"/>
    <property type="project" value="TreeGrafter"/>
</dbReference>
<dbReference type="CDD" id="cd00320">
    <property type="entry name" value="cpn10"/>
    <property type="match status" value="1"/>
</dbReference>
<dbReference type="FunFam" id="2.30.33.40:FF:000001">
    <property type="entry name" value="10 kDa chaperonin"/>
    <property type="match status" value="1"/>
</dbReference>
<dbReference type="Gene3D" id="2.30.33.40">
    <property type="entry name" value="GroES chaperonin"/>
    <property type="match status" value="1"/>
</dbReference>
<dbReference type="HAMAP" id="MF_00580">
    <property type="entry name" value="CH10"/>
    <property type="match status" value="1"/>
</dbReference>
<dbReference type="InterPro" id="IPR020818">
    <property type="entry name" value="Chaperonin_GroES"/>
</dbReference>
<dbReference type="InterPro" id="IPR037124">
    <property type="entry name" value="Chaperonin_GroES_sf"/>
</dbReference>
<dbReference type="InterPro" id="IPR018369">
    <property type="entry name" value="Chaprnonin_Cpn10_CS"/>
</dbReference>
<dbReference type="InterPro" id="IPR011032">
    <property type="entry name" value="GroES-like_sf"/>
</dbReference>
<dbReference type="NCBIfam" id="NF001530">
    <property type="entry name" value="PRK00364.1-6"/>
    <property type="match status" value="1"/>
</dbReference>
<dbReference type="NCBIfam" id="NF001531">
    <property type="entry name" value="PRK00364.2-2"/>
    <property type="match status" value="1"/>
</dbReference>
<dbReference type="NCBIfam" id="NF001533">
    <property type="entry name" value="PRK00364.2-4"/>
    <property type="match status" value="1"/>
</dbReference>
<dbReference type="NCBIfam" id="NF001534">
    <property type="entry name" value="PRK00364.2-5"/>
    <property type="match status" value="1"/>
</dbReference>
<dbReference type="PANTHER" id="PTHR10772">
    <property type="entry name" value="10 KDA HEAT SHOCK PROTEIN"/>
    <property type="match status" value="1"/>
</dbReference>
<dbReference type="PANTHER" id="PTHR10772:SF58">
    <property type="entry name" value="CO-CHAPERONIN GROES"/>
    <property type="match status" value="1"/>
</dbReference>
<dbReference type="Pfam" id="PF00166">
    <property type="entry name" value="Cpn10"/>
    <property type="match status" value="1"/>
</dbReference>
<dbReference type="PRINTS" id="PR00297">
    <property type="entry name" value="CHAPERONIN10"/>
</dbReference>
<dbReference type="SMART" id="SM00883">
    <property type="entry name" value="Cpn10"/>
    <property type="match status" value="1"/>
</dbReference>
<dbReference type="SUPFAM" id="SSF50129">
    <property type="entry name" value="GroES-like"/>
    <property type="match status" value="1"/>
</dbReference>
<dbReference type="PROSITE" id="PS00681">
    <property type="entry name" value="CHAPERONINS_CPN10"/>
    <property type="match status" value="1"/>
</dbReference>
<protein>
    <recommendedName>
        <fullName evidence="1">Co-chaperonin GroES</fullName>
    </recommendedName>
    <alternativeName>
        <fullName evidence="1">10 kDa chaperonin</fullName>
    </alternativeName>
    <alternativeName>
        <fullName evidence="1">Chaperonin-10</fullName>
        <shortName evidence="1">Cpn10</shortName>
    </alternativeName>
</protein>
<organism>
    <name type="scientific">Mycobacterium ulcerans (strain Agy99)</name>
    <dbReference type="NCBI Taxonomy" id="362242"/>
    <lineage>
        <taxon>Bacteria</taxon>
        <taxon>Bacillati</taxon>
        <taxon>Actinomycetota</taxon>
        <taxon>Actinomycetes</taxon>
        <taxon>Mycobacteriales</taxon>
        <taxon>Mycobacteriaceae</taxon>
        <taxon>Mycobacterium</taxon>
        <taxon>Mycobacterium ulcerans group</taxon>
    </lineage>
</organism>
<feature type="chain" id="PRO_1000025306" description="Co-chaperonin GroES">
    <location>
        <begin position="1"/>
        <end position="100"/>
    </location>
</feature>
<sequence>MAKVNIKPLEDKILVQANEAETTTASGLVIPDTAKEKPQEGTVVAVGPGRWDEDGEKRIPLDVAEGDTVIYSKYGGTEIKYGGEEYLILSARDVLAVVSK</sequence>
<comment type="function">
    <text evidence="1">Together with the chaperonin GroEL, plays an essential role in assisting protein folding. The GroEL-GroES system forms a nano-cage that allows encapsulation of the non-native substrate proteins and provides a physical environment optimized to promote and accelerate protein folding. GroES binds to the apical surface of the GroEL ring, thereby capping the opening of the GroEL channel.</text>
</comment>
<comment type="subunit">
    <text evidence="1">Heptamer of 7 subunits arranged in a ring. Interacts with the chaperonin GroEL.</text>
</comment>
<comment type="subcellular location">
    <subcellularLocation>
        <location evidence="1">Cytoplasm</location>
    </subcellularLocation>
</comment>
<comment type="similarity">
    <text evidence="1">Belongs to the GroES chaperonin family.</text>
</comment>
<evidence type="ECO:0000255" key="1">
    <source>
        <dbReference type="HAMAP-Rule" id="MF_00580"/>
    </source>
</evidence>
<gene>
    <name evidence="1" type="primary">groES</name>
    <name evidence="1" type="synonym">groS</name>
    <name type="ordered locus">MUL_0885</name>
</gene>
<proteinExistence type="inferred from homology"/>